<organism>
    <name type="scientific">Mus musculus</name>
    <name type="common">Mouse</name>
    <dbReference type="NCBI Taxonomy" id="10090"/>
    <lineage>
        <taxon>Eukaryota</taxon>
        <taxon>Metazoa</taxon>
        <taxon>Chordata</taxon>
        <taxon>Craniata</taxon>
        <taxon>Vertebrata</taxon>
        <taxon>Euteleostomi</taxon>
        <taxon>Mammalia</taxon>
        <taxon>Eutheria</taxon>
        <taxon>Euarchontoglires</taxon>
        <taxon>Glires</taxon>
        <taxon>Rodentia</taxon>
        <taxon>Myomorpha</taxon>
        <taxon>Muroidea</taxon>
        <taxon>Muridae</taxon>
        <taxon>Murinae</taxon>
        <taxon>Mus</taxon>
        <taxon>Mus</taxon>
    </lineage>
</organism>
<name>RM39_MOUSE</name>
<accession>Q9JKF7</accession>
<accession>A6X954</accession>
<accession>Q91YK5</accession>
<accession>Q9D8U5</accession>
<dbReference type="EMBL" id="AF239728">
    <property type="protein sequence ID" value="AAF44697.1"/>
    <property type="status" value="ALT_SEQ"/>
    <property type="molecule type" value="mRNA"/>
</dbReference>
<dbReference type="EMBL" id="AK007681">
    <property type="protein sequence ID" value="BAB25185.1"/>
    <property type="status" value="ALT_INIT"/>
    <property type="molecule type" value="mRNA"/>
</dbReference>
<dbReference type="EMBL" id="CT027693">
    <property type="status" value="NOT_ANNOTATED_CDS"/>
    <property type="molecule type" value="Genomic_DNA"/>
</dbReference>
<dbReference type="EMBL" id="CH466521">
    <property type="protein sequence ID" value="EDK98312.1"/>
    <property type="molecule type" value="Genomic_DNA"/>
</dbReference>
<dbReference type="EMBL" id="BC012274">
    <property type="protein sequence ID" value="AAH12274.1"/>
    <property type="status" value="ALT_INIT"/>
    <property type="molecule type" value="mRNA"/>
</dbReference>
<dbReference type="EMBL" id="BC016561">
    <property type="protein sequence ID" value="AAH16561.1"/>
    <property type="status" value="ALT_INIT"/>
    <property type="molecule type" value="mRNA"/>
</dbReference>
<dbReference type="CCDS" id="CCDS57035.1"/>
<dbReference type="RefSeq" id="NP_059100.3">
    <property type="nucleotide sequence ID" value="NM_017404.4"/>
</dbReference>
<dbReference type="SMR" id="Q9JKF7"/>
<dbReference type="BioGRID" id="205200">
    <property type="interactions" value="32"/>
</dbReference>
<dbReference type="ComplexPortal" id="CPX-5302">
    <property type="entry name" value="39S mitochondrial large ribosomal subunit"/>
</dbReference>
<dbReference type="FunCoup" id="Q9JKF7">
    <property type="interactions" value="2130"/>
</dbReference>
<dbReference type="IntAct" id="Q9JKF7">
    <property type="interactions" value="1"/>
</dbReference>
<dbReference type="STRING" id="10090.ENSMUSP00000112283"/>
<dbReference type="iPTMnet" id="Q9JKF7"/>
<dbReference type="PhosphoSitePlus" id="Q9JKF7"/>
<dbReference type="SwissPalm" id="Q9JKF7"/>
<dbReference type="jPOST" id="Q9JKF7"/>
<dbReference type="PaxDb" id="10090-ENSMUSP00000112283"/>
<dbReference type="PeptideAtlas" id="Q9JKF7"/>
<dbReference type="ProteomicsDB" id="299832"/>
<dbReference type="Pumba" id="Q9JKF7"/>
<dbReference type="Antibodypedia" id="6007">
    <property type="antibodies" value="198 antibodies from 23 providers"/>
</dbReference>
<dbReference type="DNASU" id="27393"/>
<dbReference type="Ensembl" id="ENSMUST00000116584.2">
    <property type="protein sequence ID" value="ENSMUSP00000112283.2"/>
    <property type="gene ID" value="ENSMUSG00000022889.8"/>
</dbReference>
<dbReference type="GeneID" id="27393"/>
<dbReference type="KEGG" id="mmu:27393"/>
<dbReference type="UCSC" id="uc007zte.2">
    <property type="organism name" value="mouse"/>
</dbReference>
<dbReference type="AGR" id="MGI:1351620"/>
<dbReference type="CTD" id="54148"/>
<dbReference type="MGI" id="MGI:1351620">
    <property type="gene designation" value="Mrpl39"/>
</dbReference>
<dbReference type="VEuPathDB" id="HostDB:ENSMUSG00000022889"/>
<dbReference type="eggNOG" id="KOG1637">
    <property type="taxonomic scope" value="Eukaryota"/>
</dbReference>
<dbReference type="GeneTree" id="ENSGT00940000156271"/>
<dbReference type="HOGENOM" id="CLU_071313_0_0_1"/>
<dbReference type="InParanoid" id="Q9JKF7"/>
<dbReference type="OMA" id="YNCAQHL"/>
<dbReference type="OrthoDB" id="5870821at2759"/>
<dbReference type="PhylomeDB" id="Q9JKF7"/>
<dbReference type="TreeFam" id="TF300858"/>
<dbReference type="Reactome" id="R-MMU-5389840">
    <property type="pathway name" value="Mitochondrial translation elongation"/>
</dbReference>
<dbReference type="Reactome" id="R-MMU-5419276">
    <property type="pathway name" value="Mitochondrial translation termination"/>
</dbReference>
<dbReference type="BioGRID-ORCS" id="27393">
    <property type="hits" value="22 hits in 79 CRISPR screens"/>
</dbReference>
<dbReference type="ChiTaRS" id="Mrpl39">
    <property type="organism name" value="mouse"/>
</dbReference>
<dbReference type="PRO" id="PR:Q9JKF7"/>
<dbReference type="Proteomes" id="UP000000589">
    <property type="component" value="Chromosome 16"/>
</dbReference>
<dbReference type="RNAct" id="Q9JKF7">
    <property type="molecule type" value="protein"/>
</dbReference>
<dbReference type="Bgee" id="ENSMUSG00000022889">
    <property type="expression patterns" value="Expressed in optic fissure and 263 other cell types or tissues"/>
</dbReference>
<dbReference type="GO" id="GO:0005743">
    <property type="term" value="C:mitochondrial inner membrane"/>
    <property type="evidence" value="ECO:0000303"/>
    <property type="project" value="ComplexPortal"/>
</dbReference>
<dbReference type="GO" id="GO:0005762">
    <property type="term" value="C:mitochondrial large ribosomal subunit"/>
    <property type="evidence" value="ECO:0000250"/>
    <property type="project" value="UniProtKB"/>
</dbReference>
<dbReference type="GO" id="GO:0005739">
    <property type="term" value="C:mitochondrion"/>
    <property type="evidence" value="ECO:0007005"/>
    <property type="project" value="MGI"/>
</dbReference>
<dbReference type="GO" id="GO:0000166">
    <property type="term" value="F:nucleotide binding"/>
    <property type="evidence" value="ECO:0007669"/>
    <property type="project" value="InterPro"/>
</dbReference>
<dbReference type="GO" id="GO:0003735">
    <property type="term" value="F:structural constituent of ribosome"/>
    <property type="evidence" value="ECO:0000247"/>
    <property type="project" value="MGI"/>
</dbReference>
<dbReference type="GO" id="GO:0000002">
    <property type="term" value="P:mitochondrial genome maintenance"/>
    <property type="evidence" value="ECO:0000304"/>
    <property type="project" value="MGI"/>
</dbReference>
<dbReference type="GO" id="GO:0032543">
    <property type="term" value="P:mitochondrial translation"/>
    <property type="evidence" value="ECO:0000303"/>
    <property type="project" value="ComplexPortal"/>
</dbReference>
<dbReference type="GO" id="GO:0006412">
    <property type="term" value="P:translation"/>
    <property type="evidence" value="ECO:0000247"/>
    <property type="project" value="MGI"/>
</dbReference>
<dbReference type="CDD" id="cd01616">
    <property type="entry name" value="TGS"/>
    <property type="match status" value="1"/>
</dbReference>
<dbReference type="FunFam" id="3.10.20.30:FF:000017">
    <property type="entry name" value="39S ribosomal protein L39, mitochondrial"/>
    <property type="match status" value="1"/>
</dbReference>
<dbReference type="FunFam" id="3.30.980.10:FF:000006">
    <property type="entry name" value="39S ribosomal protein L39, mitochondrial"/>
    <property type="match status" value="1"/>
</dbReference>
<dbReference type="Gene3D" id="3.10.20.30">
    <property type="match status" value="1"/>
</dbReference>
<dbReference type="Gene3D" id="3.30.980.10">
    <property type="entry name" value="Threonyl-trna Synthetase, Chain A, domain 2"/>
    <property type="match status" value="1"/>
</dbReference>
<dbReference type="InterPro" id="IPR012675">
    <property type="entry name" value="Beta-grasp_dom_sf"/>
</dbReference>
<dbReference type="InterPro" id="IPR050062">
    <property type="entry name" value="Pro-tRNA_synthetase"/>
</dbReference>
<dbReference type="InterPro" id="IPR004095">
    <property type="entry name" value="TGS"/>
</dbReference>
<dbReference type="InterPro" id="IPR012676">
    <property type="entry name" value="TGS-like"/>
</dbReference>
<dbReference type="InterPro" id="IPR018163">
    <property type="entry name" value="Thr/Ala-tRNA-synth_IIc_edit"/>
</dbReference>
<dbReference type="PANTHER" id="PTHR42753:SF9">
    <property type="entry name" value="LARGE RIBOSOMAL SUBUNIT PROTEIN ML39"/>
    <property type="match status" value="1"/>
</dbReference>
<dbReference type="PANTHER" id="PTHR42753">
    <property type="entry name" value="MITOCHONDRIAL RIBOSOME PROTEIN L39/PROLYL-TRNA LIGASE FAMILY MEMBER"/>
    <property type="match status" value="1"/>
</dbReference>
<dbReference type="SUPFAM" id="SSF81271">
    <property type="entry name" value="TGS-like"/>
    <property type="match status" value="1"/>
</dbReference>
<dbReference type="SUPFAM" id="SSF55186">
    <property type="entry name" value="ThrRS/AlaRS common domain"/>
    <property type="match status" value="1"/>
</dbReference>
<dbReference type="PROSITE" id="PS51880">
    <property type="entry name" value="TGS"/>
    <property type="match status" value="1"/>
</dbReference>
<protein>
    <recommendedName>
        <fullName evidence="3">Large ribosomal subunit protein mL39</fullName>
    </recommendedName>
    <alternativeName>
        <fullName>39S ribosomal protein L39, mitochondrial</fullName>
        <shortName>L39mt</shortName>
        <shortName>MRP-L39</shortName>
    </alternativeName>
</protein>
<keyword id="KW-0007">Acetylation</keyword>
<keyword id="KW-0496">Mitochondrion</keyword>
<keyword id="KW-1185">Reference proteome</keyword>
<keyword id="KW-0687">Ribonucleoprotein</keyword>
<keyword id="KW-0689">Ribosomal protein</keyword>
<gene>
    <name type="primary">Mrpl39</name>
</gene>
<sequence>MATAVGRLVLRRPGAGGGARWRFIATSPAAELSPTELTEMRNDLFNREKSRQLSLTPRTEKIEVKHVGKTDPGTVFVMNKNISTPYSCAMHLSEWYCSKSILALVDGQPWDMYKPLTKSCEIKFLTFKDPDPKEVNKAYWRSCAMMLGCVIERAFKDDYVVSLVRAPEVPVIAGAFCYDVTLDKRLDEWMPTKENLRSFTKDAHALIYRDLPFETLDVDARVALEIFQHNKYKVDFIEEKASQNPERIVKLHRIGDFIDVSEGPLIPRTSVCFQYEVSAVHNLNPSQPNLIRRFQGLSLPTHLRAQFTIWDKLVERSRKMVTEDEVRQTENTESTQ</sequence>
<proteinExistence type="evidence at protein level"/>
<reference key="1">
    <citation type="submission" date="2000-02" db="EMBL/GenBank/DDBJ databases">
        <title>Construction of a transcript map in the LL56-APP region of chromosome 21q21.1-21.2.</title>
        <authorList>
            <person name="Choi D.K."/>
            <person name="Taylor T.D."/>
            <person name="Hattori M."/>
            <person name="Sakaki Y."/>
        </authorList>
    </citation>
    <scope>NUCLEOTIDE SEQUENCE [MRNA]</scope>
</reference>
<reference key="2">
    <citation type="journal article" date="2005" name="Science">
        <title>The transcriptional landscape of the mammalian genome.</title>
        <authorList>
            <person name="Carninci P."/>
            <person name="Kasukawa T."/>
            <person name="Katayama S."/>
            <person name="Gough J."/>
            <person name="Frith M.C."/>
            <person name="Maeda N."/>
            <person name="Oyama R."/>
            <person name="Ravasi T."/>
            <person name="Lenhard B."/>
            <person name="Wells C."/>
            <person name="Kodzius R."/>
            <person name="Shimokawa K."/>
            <person name="Bajic V.B."/>
            <person name="Brenner S.E."/>
            <person name="Batalov S."/>
            <person name="Forrest A.R."/>
            <person name="Zavolan M."/>
            <person name="Davis M.J."/>
            <person name="Wilming L.G."/>
            <person name="Aidinis V."/>
            <person name="Allen J.E."/>
            <person name="Ambesi-Impiombato A."/>
            <person name="Apweiler R."/>
            <person name="Aturaliya R.N."/>
            <person name="Bailey T.L."/>
            <person name="Bansal M."/>
            <person name="Baxter L."/>
            <person name="Beisel K.W."/>
            <person name="Bersano T."/>
            <person name="Bono H."/>
            <person name="Chalk A.M."/>
            <person name="Chiu K.P."/>
            <person name="Choudhary V."/>
            <person name="Christoffels A."/>
            <person name="Clutterbuck D.R."/>
            <person name="Crowe M.L."/>
            <person name="Dalla E."/>
            <person name="Dalrymple B.P."/>
            <person name="de Bono B."/>
            <person name="Della Gatta G."/>
            <person name="di Bernardo D."/>
            <person name="Down T."/>
            <person name="Engstrom P."/>
            <person name="Fagiolini M."/>
            <person name="Faulkner G."/>
            <person name="Fletcher C.F."/>
            <person name="Fukushima T."/>
            <person name="Furuno M."/>
            <person name="Futaki S."/>
            <person name="Gariboldi M."/>
            <person name="Georgii-Hemming P."/>
            <person name="Gingeras T.R."/>
            <person name="Gojobori T."/>
            <person name="Green R.E."/>
            <person name="Gustincich S."/>
            <person name="Harbers M."/>
            <person name="Hayashi Y."/>
            <person name="Hensch T.K."/>
            <person name="Hirokawa N."/>
            <person name="Hill D."/>
            <person name="Huminiecki L."/>
            <person name="Iacono M."/>
            <person name="Ikeo K."/>
            <person name="Iwama A."/>
            <person name="Ishikawa T."/>
            <person name="Jakt M."/>
            <person name="Kanapin A."/>
            <person name="Katoh M."/>
            <person name="Kawasawa Y."/>
            <person name="Kelso J."/>
            <person name="Kitamura H."/>
            <person name="Kitano H."/>
            <person name="Kollias G."/>
            <person name="Krishnan S.P."/>
            <person name="Kruger A."/>
            <person name="Kummerfeld S.K."/>
            <person name="Kurochkin I.V."/>
            <person name="Lareau L.F."/>
            <person name="Lazarevic D."/>
            <person name="Lipovich L."/>
            <person name="Liu J."/>
            <person name="Liuni S."/>
            <person name="McWilliam S."/>
            <person name="Madan Babu M."/>
            <person name="Madera M."/>
            <person name="Marchionni L."/>
            <person name="Matsuda H."/>
            <person name="Matsuzawa S."/>
            <person name="Miki H."/>
            <person name="Mignone F."/>
            <person name="Miyake S."/>
            <person name="Morris K."/>
            <person name="Mottagui-Tabar S."/>
            <person name="Mulder N."/>
            <person name="Nakano N."/>
            <person name="Nakauchi H."/>
            <person name="Ng P."/>
            <person name="Nilsson R."/>
            <person name="Nishiguchi S."/>
            <person name="Nishikawa S."/>
            <person name="Nori F."/>
            <person name="Ohara O."/>
            <person name="Okazaki Y."/>
            <person name="Orlando V."/>
            <person name="Pang K.C."/>
            <person name="Pavan W.J."/>
            <person name="Pavesi G."/>
            <person name="Pesole G."/>
            <person name="Petrovsky N."/>
            <person name="Piazza S."/>
            <person name="Reed J."/>
            <person name="Reid J.F."/>
            <person name="Ring B.Z."/>
            <person name="Ringwald M."/>
            <person name="Rost B."/>
            <person name="Ruan Y."/>
            <person name="Salzberg S.L."/>
            <person name="Sandelin A."/>
            <person name="Schneider C."/>
            <person name="Schoenbach C."/>
            <person name="Sekiguchi K."/>
            <person name="Semple C.A."/>
            <person name="Seno S."/>
            <person name="Sessa L."/>
            <person name="Sheng Y."/>
            <person name="Shibata Y."/>
            <person name="Shimada H."/>
            <person name="Shimada K."/>
            <person name="Silva D."/>
            <person name="Sinclair B."/>
            <person name="Sperling S."/>
            <person name="Stupka E."/>
            <person name="Sugiura K."/>
            <person name="Sultana R."/>
            <person name="Takenaka Y."/>
            <person name="Taki K."/>
            <person name="Tammoja K."/>
            <person name="Tan S.L."/>
            <person name="Tang S."/>
            <person name="Taylor M.S."/>
            <person name="Tegner J."/>
            <person name="Teichmann S.A."/>
            <person name="Ueda H.R."/>
            <person name="van Nimwegen E."/>
            <person name="Verardo R."/>
            <person name="Wei C.L."/>
            <person name="Yagi K."/>
            <person name="Yamanishi H."/>
            <person name="Zabarovsky E."/>
            <person name="Zhu S."/>
            <person name="Zimmer A."/>
            <person name="Hide W."/>
            <person name="Bult C."/>
            <person name="Grimmond S.M."/>
            <person name="Teasdale R.D."/>
            <person name="Liu E.T."/>
            <person name="Brusic V."/>
            <person name="Quackenbush J."/>
            <person name="Wahlestedt C."/>
            <person name="Mattick J.S."/>
            <person name="Hume D.A."/>
            <person name="Kai C."/>
            <person name="Sasaki D."/>
            <person name="Tomaru Y."/>
            <person name="Fukuda S."/>
            <person name="Kanamori-Katayama M."/>
            <person name="Suzuki M."/>
            <person name="Aoki J."/>
            <person name="Arakawa T."/>
            <person name="Iida J."/>
            <person name="Imamura K."/>
            <person name="Itoh M."/>
            <person name="Kato T."/>
            <person name="Kawaji H."/>
            <person name="Kawagashira N."/>
            <person name="Kawashima T."/>
            <person name="Kojima M."/>
            <person name="Kondo S."/>
            <person name="Konno H."/>
            <person name="Nakano K."/>
            <person name="Ninomiya N."/>
            <person name="Nishio T."/>
            <person name="Okada M."/>
            <person name="Plessy C."/>
            <person name="Shibata K."/>
            <person name="Shiraki T."/>
            <person name="Suzuki S."/>
            <person name="Tagami M."/>
            <person name="Waki K."/>
            <person name="Watahiki A."/>
            <person name="Okamura-Oho Y."/>
            <person name="Suzuki H."/>
            <person name="Kawai J."/>
            <person name="Hayashizaki Y."/>
        </authorList>
    </citation>
    <scope>NUCLEOTIDE SEQUENCE [LARGE SCALE MRNA]</scope>
    <source>
        <strain>C57BL/6J</strain>
        <tissue>Pancreas</tissue>
    </source>
</reference>
<reference key="3">
    <citation type="journal article" date="2009" name="PLoS Biol.">
        <title>Lineage-specific biology revealed by a finished genome assembly of the mouse.</title>
        <authorList>
            <person name="Church D.M."/>
            <person name="Goodstadt L."/>
            <person name="Hillier L.W."/>
            <person name="Zody M.C."/>
            <person name="Goldstein S."/>
            <person name="She X."/>
            <person name="Bult C.J."/>
            <person name="Agarwala R."/>
            <person name="Cherry J.L."/>
            <person name="DiCuccio M."/>
            <person name="Hlavina W."/>
            <person name="Kapustin Y."/>
            <person name="Meric P."/>
            <person name="Maglott D."/>
            <person name="Birtle Z."/>
            <person name="Marques A.C."/>
            <person name="Graves T."/>
            <person name="Zhou S."/>
            <person name="Teague B."/>
            <person name="Potamousis K."/>
            <person name="Churas C."/>
            <person name="Place M."/>
            <person name="Herschleb J."/>
            <person name="Runnheim R."/>
            <person name="Forrest D."/>
            <person name="Amos-Landgraf J."/>
            <person name="Schwartz D.C."/>
            <person name="Cheng Z."/>
            <person name="Lindblad-Toh K."/>
            <person name="Eichler E.E."/>
            <person name="Ponting C.P."/>
        </authorList>
    </citation>
    <scope>NUCLEOTIDE SEQUENCE [LARGE SCALE GENOMIC DNA]</scope>
    <source>
        <strain>C57BL/6J</strain>
    </source>
</reference>
<reference key="4">
    <citation type="submission" date="2005-07" db="EMBL/GenBank/DDBJ databases">
        <authorList>
            <person name="Mural R.J."/>
            <person name="Adams M.D."/>
            <person name="Myers E.W."/>
            <person name="Smith H.O."/>
            <person name="Venter J.C."/>
        </authorList>
    </citation>
    <scope>NUCLEOTIDE SEQUENCE [LARGE SCALE GENOMIC DNA]</scope>
</reference>
<reference key="5">
    <citation type="journal article" date="2004" name="Genome Res.">
        <title>The status, quality, and expansion of the NIH full-length cDNA project: the Mammalian Gene Collection (MGC).</title>
        <authorList>
            <consortium name="The MGC Project Team"/>
        </authorList>
    </citation>
    <scope>NUCLEOTIDE SEQUENCE [LARGE SCALE MRNA]</scope>
</reference>
<reference key="6">
    <citation type="journal article" date="2010" name="Cell">
        <title>A tissue-specific atlas of mouse protein phosphorylation and expression.</title>
        <authorList>
            <person name="Huttlin E.L."/>
            <person name="Jedrychowski M.P."/>
            <person name="Elias J.E."/>
            <person name="Goswami T."/>
            <person name="Rad R."/>
            <person name="Beausoleil S.A."/>
            <person name="Villen J."/>
            <person name="Haas W."/>
            <person name="Sowa M.E."/>
            <person name="Gygi S.P."/>
        </authorList>
    </citation>
    <scope>IDENTIFICATION BY MASS SPECTROMETRY [LARGE SCALE ANALYSIS]</scope>
    <source>
        <tissue>Brain</tissue>
        <tissue>Brown adipose tissue</tissue>
        <tissue>Heart</tissue>
        <tissue>Kidney</tissue>
        <tissue>Liver</tissue>
        <tissue>Pancreas</tissue>
        <tissue>Testis</tissue>
    </source>
</reference>
<evidence type="ECO:0000250" key="1">
    <source>
        <dbReference type="UniProtKB" id="Q9NYK5"/>
    </source>
</evidence>
<evidence type="ECO:0000255" key="2">
    <source>
        <dbReference type="PROSITE-ProRule" id="PRU01228"/>
    </source>
</evidence>
<evidence type="ECO:0000305" key="3"/>
<feature type="chain" id="PRO_0000087685" description="Large ribosomal subunit protein mL39">
    <location>
        <begin position="1"/>
        <end position="336"/>
    </location>
</feature>
<feature type="domain" description="TGS" evidence="2">
    <location>
        <begin position="60"/>
        <end position="126"/>
    </location>
</feature>
<feature type="modified residue" description="N6-acetyllysine" evidence="1">
    <location>
        <position position="123"/>
    </location>
</feature>
<feature type="sequence conflict" description="In Ref. 5; AAH16561." evidence="3" ref="5">
    <original>K</original>
    <variation>R</variation>
    <location>
        <position position="133"/>
    </location>
</feature>
<feature type="sequence conflict" description="In Ref. 5; AAH16561." evidence="3" ref="5">
    <original>V</original>
    <variation>L</variation>
    <location>
        <position position="164"/>
    </location>
</feature>
<feature type="sequence conflict" description="In Ref. 1; AAF44697." evidence="3" ref="1">
    <original>L</original>
    <variation>F</variation>
    <location>
        <position position="283"/>
    </location>
</feature>
<feature type="sequence conflict" description="In Ref. 5; AAH16561." evidence="3" ref="5">
    <original>E</original>
    <variation>G</variation>
    <location>
        <position position="315"/>
    </location>
</feature>
<feature type="sequence conflict" description="In Ref. 1; AAF44697." evidence="3" ref="1">
    <original>S</original>
    <variation>F</variation>
    <location>
        <position position="317"/>
    </location>
</feature>
<comment type="subunit">
    <text evidence="1">Component of the mitochondrial ribosome large subunit (39S) which comprises a 16S rRNA and about 50 distinct proteins.</text>
</comment>
<comment type="subcellular location">
    <subcellularLocation>
        <location evidence="1">Mitochondrion</location>
    </subcellularLocation>
</comment>
<comment type="similarity">
    <text evidence="3">Belongs to the mitochondrion-specific ribosomal protein mL39 family.</text>
</comment>
<comment type="sequence caution" evidence="3">
    <conflict type="frameshift">
        <sequence resource="EMBL-CDS" id="AAF44697"/>
    </conflict>
</comment>
<comment type="sequence caution" evidence="3">
    <conflict type="erroneous initiation">
        <sequence resource="EMBL-CDS" id="AAH12274"/>
    </conflict>
</comment>
<comment type="sequence caution" evidence="3">
    <conflict type="erroneous initiation">
        <sequence resource="EMBL-CDS" id="AAH16561"/>
    </conflict>
</comment>
<comment type="sequence caution" evidence="3">
    <conflict type="erroneous initiation">
        <sequence resource="EMBL-CDS" id="BAB25185"/>
    </conflict>
</comment>